<organism>
    <name type="scientific">Arabidopsis thaliana</name>
    <name type="common">Mouse-ear cress</name>
    <dbReference type="NCBI Taxonomy" id="3702"/>
    <lineage>
        <taxon>Eukaryota</taxon>
        <taxon>Viridiplantae</taxon>
        <taxon>Streptophyta</taxon>
        <taxon>Embryophyta</taxon>
        <taxon>Tracheophyta</taxon>
        <taxon>Spermatophyta</taxon>
        <taxon>Magnoliopsida</taxon>
        <taxon>eudicotyledons</taxon>
        <taxon>Gunneridae</taxon>
        <taxon>Pentapetalae</taxon>
        <taxon>rosids</taxon>
        <taxon>malvids</taxon>
        <taxon>Brassicales</taxon>
        <taxon>Brassicaceae</taxon>
        <taxon>Camelineae</taxon>
        <taxon>Arabidopsis</taxon>
    </lineage>
</organism>
<sequence>MRLFDPWPVFFKREWKRCWPFLTGFAVTGVLITKLTAGLTEEDAKNSKFVQQHRR</sequence>
<accession>P0DO44</accession>
<accession>A0A178V8C6</accession>
<accession>Q9SN96</accession>
<gene>
    <name evidence="6 7" type="primary">ATP6</name>
    <name evidence="9" type="ordered locus">At3g46430</name>
    <name evidence="10" type="ORF">F18L15.150</name>
</gene>
<protein>
    <recommendedName>
        <fullName evidence="6 7">ATP synthase small subunit 6-A, mitochondrial</fullName>
        <shortName evidence="6 7">AtMtATP6</shortName>
        <shortName evidence="6 7">MtATP6</shortName>
    </recommendedName>
    <alternativeName>
        <fullName evidence="8">ATP synthase 6 kDa subunit, mitochondrial</fullName>
    </alternativeName>
</protein>
<evidence type="ECO:0000255" key="1"/>
<evidence type="ECO:0000269" key="2">
    <source>
    </source>
</evidence>
<evidence type="ECO:0000269" key="3">
    <source>
    </source>
</evidence>
<evidence type="ECO:0000269" key="4">
    <source>
    </source>
</evidence>
<evidence type="ECO:0000269" key="5">
    <source>
    </source>
</evidence>
<evidence type="ECO:0000303" key="6">
    <source>
    </source>
</evidence>
<evidence type="ECO:0000303" key="7">
    <source>
    </source>
</evidence>
<evidence type="ECO:0000305" key="8"/>
<evidence type="ECO:0000312" key="9">
    <source>
        <dbReference type="Araport" id="AT3G46430"/>
    </source>
</evidence>
<evidence type="ECO:0000312" key="10">
    <source>
        <dbReference type="EMBL" id="CAB62034.1"/>
    </source>
</evidence>
<proteinExistence type="evidence at transcript level"/>
<name>ATP6A_ARATH</name>
<reference key="1">
    <citation type="journal article" date="2000" name="Nature">
        <title>Sequence and analysis of chromosome 3 of the plant Arabidopsis thaliana.</title>
        <authorList>
            <person name="Salanoubat M."/>
            <person name="Lemcke K."/>
            <person name="Rieger M."/>
            <person name="Ansorge W."/>
            <person name="Unseld M."/>
            <person name="Fartmann B."/>
            <person name="Valle G."/>
            <person name="Bloecker H."/>
            <person name="Perez-Alonso M."/>
            <person name="Obermaier B."/>
            <person name="Delseny M."/>
            <person name="Boutry M."/>
            <person name="Grivell L.A."/>
            <person name="Mache R."/>
            <person name="Puigdomenech P."/>
            <person name="De Simone V."/>
            <person name="Choisne N."/>
            <person name="Artiguenave F."/>
            <person name="Robert C."/>
            <person name="Brottier P."/>
            <person name="Wincker P."/>
            <person name="Cattolico L."/>
            <person name="Weissenbach J."/>
            <person name="Saurin W."/>
            <person name="Quetier F."/>
            <person name="Schaefer M."/>
            <person name="Mueller-Auer S."/>
            <person name="Gabel C."/>
            <person name="Fuchs M."/>
            <person name="Benes V."/>
            <person name="Wurmbach E."/>
            <person name="Drzonek H."/>
            <person name="Erfle H."/>
            <person name="Jordan N."/>
            <person name="Bangert S."/>
            <person name="Wiedelmann R."/>
            <person name="Kranz H."/>
            <person name="Voss H."/>
            <person name="Holland R."/>
            <person name="Brandt P."/>
            <person name="Nyakatura G."/>
            <person name="Vezzi A."/>
            <person name="D'Angelo M."/>
            <person name="Pallavicini A."/>
            <person name="Toppo S."/>
            <person name="Simionati B."/>
            <person name="Conrad A."/>
            <person name="Hornischer K."/>
            <person name="Kauer G."/>
            <person name="Loehnert T.-H."/>
            <person name="Nordsiek G."/>
            <person name="Reichelt J."/>
            <person name="Scharfe M."/>
            <person name="Schoen O."/>
            <person name="Bargues M."/>
            <person name="Terol J."/>
            <person name="Climent J."/>
            <person name="Navarro P."/>
            <person name="Collado C."/>
            <person name="Perez-Perez A."/>
            <person name="Ottenwaelder B."/>
            <person name="Duchemin D."/>
            <person name="Cooke R."/>
            <person name="Laudie M."/>
            <person name="Berger-Llauro C."/>
            <person name="Purnelle B."/>
            <person name="Masuy D."/>
            <person name="de Haan M."/>
            <person name="Maarse A.C."/>
            <person name="Alcaraz J.-P."/>
            <person name="Cottet A."/>
            <person name="Casacuberta E."/>
            <person name="Monfort A."/>
            <person name="Argiriou A."/>
            <person name="Flores M."/>
            <person name="Liguori R."/>
            <person name="Vitale D."/>
            <person name="Mannhaupt G."/>
            <person name="Haase D."/>
            <person name="Schoof H."/>
            <person name="Rudd S."/>
            <person name="Zaccaria P."/>
            <person name="Mewes H.-W."/>
            <person name="Mayer K.F.X."/>
            <person name="Kaul S."/>
            <person name="Town C.D."/>
            <person name="Koo H.L."/>
            <person name="Tallon L.J."/>
            <person name="Jenkins J."/>
            <person name="Rooney T."/>
            <person name="Rizzo M."/>
            <person name="Walts A."/>
            <person name="Utterback T."/>
            <person name="Fujii C.Y."/>
            <person name="Shea T.P."/>
            <person name="Creasy T.H."/>
            <person name="Haas B."/>
            <person name="Maiti R."/>
            <person name="Wu D."/>
            <person name="Peterson J."/>
            <person name="Van Aken S."/>
            <person name="Pai G."/>
            <person name="Militscher J."/>
            <person name="Sellers P."/>
            <person name="Gill J.E."/>
            <person name="Feldblyum T.V."/>
            <person name="Preuss D."/>
            <person name="Lin X."/>
            <person name="Nierman W.C."/>
            <person name="Salzberg S.L."/>
            <person name="White O."/>
            <person name="Venter J.C."/>
            <person name="Fraser C.M."/>
            <person name="Kaneko T."/>
            <person name="Nakamura Y."/>
            <person name="Sato S."/>
            <person name="Kato T."/>
            <person name="Asamizu E."/>
            <person name="Sasamoto S."/>
            <person name="Kimura T."/>
            <person name="Idesawa K."/>
            <person name="Kawashima K."/>
            <person name="Kishida Y."/>
            <person name="Kiyokawa C."/>
            <person name="Kohara M."/>
            <person name="Matsumoto M."/>
            <person name="Matsuno A."/>
            <person name="Muraki A."/>
            <person name="Nakayama S."/>
            <person name="Nakazaki N."/>
            <person name="Shinpo S."/>
            <person name="Takeuchi C."/>
            <person name="Wada T."/>
            <person name="Watanabe A."/>
            <person name="Yamada M."/>
            <person name="Yasuda M."/>
            <person name="Tabata S."/>
        </authorList>
    </citation>
    <scope>NUCLEOTIDE SEQUENCE [LARGE SCALE GENOMIC DNA]</scope>
    <source>
        <strain>cv. Columbia</strain>
    </source>
</reference>
<reference key="2">
    <citation type="journal article" date="2017" name="Plant J.">
        <title>Araport11: a complete reannotation of the Arabidopsis thaliana reference genome.</title>
        <authorList>
            <person name="Cheng C.Y."/>
            <person name="Krishnakumar V."/>
            <person name="Chan A.P."/>
            <person name="Thibaud-Nissen F."/>
            <person name="Schobel S."/>
            <person name="Town C.D."/>
        </authorList>
    </citation>
    <scope>GENOME REANNOTATION</scope>
    <source>
        <strain>cv. Columbia</strain>
    </source>
</reference>
<reference key="3">
    <citation type="journal article" date="2002" name="Science">
        <title>Functional annotation of a full-length Arabidopsis cDNA collection.</title>
        <authorList>
            <person name="Seki M."/>
            <person name="Narusaka M."/>
            <person name="Kamiya A."/>
            <person name="Ishida J."/>
            <person name="Satou M."/>
            <person name="Sakurai T."/>
            <person name="Nakajima M."/>
            <person name="Enju A."/>
            <person name="Akiyama K."/>
            <person name="Oono Y."/>
            <person name="Muramatsu M."/>
            <person name="Hayashizaki Y."/>
            <person name="Kawai J."/>
            <person name="Carninci P."/>
            <person name="Itoh M."/>
            <person name="Ishii Y."/>
            <person name="Arakawa T."/>
            <person name="Shibata K."/>
            <person name="Shinagawa A."/>
            <person name="Shinozaki K."/>
        </authorList>
    </citation>
    <scope>NUCLEOTIDE SEQUENCE [LARGE SCALE MRNA]</scope>
    <source>
        <strain>cv. Columbia</strain>
    </source>
</reference>
<reference key="4">
    <citation type="journal article" date="2003" name="Science">
        <title>Empirical analysis of transcriptional activity in the Arabidopsis genome.</title>
        <authorList>
            <person name="Yamada K."/>
            <person name="Lim J."/>
            <person name="Dale J.M."/>
            <person name="Chen H."/>
            <person name="Shinn P."/>
            <person name="Palm C.J."/>
            <person name="Southwick A.M."/>
            <person name="Wu H.C."/>
            <person name="Kim C.J."/>
            <person name="Nguyen M."/>
            <person name="Pham P.K."/>
            <person name="Cheuk R.F."/>
            <person name="Karlin-Newmann G."/>
            <person name="Liu S.X."/>
            <person name="Lam B."/>
            <person name="Sakano H."/>
            <person name="Wu T."/>
            <person name="Yu G."/>
            <person name="Miranda M."/>
            <person name="Quach H.L."/>
            <person name="Tripp M."/>
            <person name="Chang C.H."/>
            <person name="Lee J.M."/>
            <person name="Toriumi M.J."/>
            <person name="Chan M.M."/>
            <person name="Tang C.C."/>
            <person name="Onodera C.S."/>
            <person name="Deng J.M."/>
            <person name="Akiyama K."/>
            <person name="Ansari Y."/>
            <person name="Arakawa T."/>
            <person name="Banh J."/>
            <person name="Banno F."/>
            <person name="Bowser L."/>
            <person name="Brooks S.Y."/>
            <person name="Carninci P."/>
            <person name="Chao Q."/>
            <person name="Choy N."/>
            <person name="Enju A."/>
            <person name="Goldsmith A.D."/>
            <person name="Gurjal M."/>
            <person name="Hansen N.F."/>
            <person name="Hayashizaki Y."/>
            <person name="Johnson-Hopson C."/>
            <person name="Hsuan V.W."/>
            <person name="Iida K."/>
            <person name="Karnes M."/>
            <person name="Khan S."/>
            <person name="Koesema E."/>
            <person name="Ishida J."/>
            <person name="Jiang P.X."/>
            <person name="Jones T."/>
            <person name="Kawai J."/>
            <person name="Kamiya A."/>
            <person name="Meyers C."/>
            <person name="Nakajima M."/>
            <person name="Narusaka M."/>
            <person name="Seki M."/>
            <person name="Sakurai T."/>
            <person name="Satou M."/>
            <person name="Tamse R."/>
            <person name="Vaysberg M."/>
            <person name="Wallender E.K."/>
            <person name="Wong C."/>
            <person name="Yamamura Y."/>
            <person name="Yuan S."/>
            <person name="Shinozaki K."/>
            <person name="Davis R.W."/>
            <person name="Theologis A."/>
            <person name="Ecker J.R."/>
        </authorList>
    </citation>
    <scope>NUCLEOTIDE SEQUENCE [LARGE SCALE MRNA]</scope>
    <source>
        <strain>cv. Columbia</strain>
    </source>
</reference>
<reference key="5">
    <citation type="journal article" date="2004" name="Phytochemistry">
        <title>The hydrophobic proteome of mitochondrial membranes from Arabidopsis cell suspensions.</title>
        <authorList>
            <person name="Brugiere S."/>
            <person name="Kowalski S."/>
            <person name="Ferro M."/>
            <person name="Seigneurin-Berny D."/>
            <person name="Miras S."/>
            <person name="Salvi D."/>
            <person name="Ravanel S."/>
            <person name="d'Herin P."/>
            <person name="Garin J."/>
            <person name="Bourguignon J."/>
            <person name="Joyard J."/>
            <person name="Rolland N."/>
        </authorList>
    </citation>
    <scope>SUBCELLULAR LOCATION</scope>
    <source>
        <strain>cv. Columbia</strain>
    </source>
</reference>
<reference key="6">
    <citation type="journal article" date="2005" name="Plant Cell">
        <title>Coordination of nuclear and mitochondrial genome expression during mitochondrial biogenesis in Arabidopsis.</title>
        <authorList>
            <person name="Giege P."/>
            <person name="Sweetlove L.J."/>
            <person name="Cognat V."/>
            <person name="Leaver C.J."/>
        </authorList>
    </citation>
    <scope>REPRESSION BY SUCROSE</scope>
    <source>
        <strain>cv. Landsberg erecta</strain>
    </source>
</reference>
<reference key="7">
    <citation type="journal article" date="2008" name="Biotechnol. Lett.">
        <title>Overexpression of a mitochondrial ATP synthase small subunit gene (AtMtATP6) confers tolerance to several abiotic stresses in Saccharomyces cerevisiae and Arabidopsis thaliana.</title>
        <authorList>
            <person name="Zhang X."/>
            <person name="Liu S."/>
            <person name="Takano T."/>
        </authorList>
    </citation>
    <scope>FUNCTION</scope>
    <scope>INDUCTION BY SALT; MANNITOL; DROUGHT AND COLD</scope>
    <source>
        <strain>cv. Columbia</strain>
    </source>
</reference>
<reference key="8">
    <citation type="journal article" date="2012" name="Genet. Mol. Res.">
        <title>Isolation and in silico functional analysis of MtATP6, a 6-kDa subunit of mitochondrial F(1)F0-ATP synthase, in response to abiotic stress.</title>
        <authorList>
            <person name="Moghadam A.A."/>
            <person name="Taghavi S.M."/>
            <person name="Niazi A."/>
            <person name="Djavaheri M."/>
            <person name="Ebrahimie E."/>
        </authorList>
    </citation>
    <scope>FUNCTION</scope>
    <scope>INDUCTION BY ABIOTIC STRESSES</scope>
</reference>
<feature type="transit peptide" description="Mitochondrion" evidence="1">
    <location>
        <begin position="1"/>
        <end position="11"/>
    </location>
</feature>
<feature type="chain" id="PRO_0000454200" description="ATP synthase small subunit 6-A, mitochondrial">
    <location>
        <begin position="12"/>
        <end position="55"/>
    </location>
</feature>
<feature type="transmembrane region" description="Helical" evidence="1">
    <location>
        <begin position="21"/>
        <end position="39"/>
    </location>
</feature>
<keyword id="KW-0138">CF(0)</keyword>
<keyword id="KW-0375">Hydrogen ion transport</keyword>
<keyword id="KW-0406">Ion transport</keyword>
<keyword id="KW-0472">Membrane</keyword>
<keyword id="KW-0496">Mitochondrion</keyword>
<keyword id="KW-0999">Mitochondrion inner membrane</keyword>
<keyword id="KW-1185">Reference proteome</keyword>
<keyword id="KW-0346">Stress response</keyword>
<keyword id="KW-0809">Transit peptide</keyword>
<keyword id="KW-0812">Transmembrane</keyword>
<keyword id="KW-1133">Transmembrane helix</keyword>
<keyword id="KW-0813">Transport</keyword>
<comment type="function">
    <text evidence="4 5 8">Mitochondrial membrane ATP synthase (F(1)F(0) ATP synthase or Complex V) produces ATP from ADP in the presence of a proton gradient across the membrane which is generated by electron transport complexes of the respiratory chain (Probable). F-type ATPases consist of two structural domains, F(1) - containing the extramembraneous catalytic core and F(0) - containing the membrane proton channel, linked together by a central stalk and a peripheral stalk (Probable). During catalysis, ATP synthesis in the catalytic domain of F(1) is coupled via a rotary mechanism of the central stalk subunits to proton translocation (Probable). Part of the complex F(0) domain (Probable). Confers tolerance to several abiotic stresses (e.g. salt, mannitol, drought, oxidative and cold stresses), probably by providing additional energy needed for cell homeostasis (PubMed:18338219, PubMed:23096681).</text>
</comment>
<comment type="subcellular location">
    <subcellularLocation>
        <location evidence="2">Mitochondrion inner membrane</location>
        <topology evidence="1">Single-pass membrane protein</topology>
    </subcellularLocation>
</comment>
<comment type="induction">
    <text evidence="3 4">Induced by several abiotic stresses such as salt, mannitol, drought and cold (PubMed:18338219). Under oxidative stress caused by H(2)O(2), transient induction followed by strongly reduced levels (PubMed:18338219). Induced by sucrose (PubMed:15829605).</text>
</comment>
<comment type="similarity">
    <text evidence="8">Belongs to the ATPase 6 subunit family.</text>
</comment>
<dbReference type="EMBL" id="AL133298">
    <property type="protein sequence ID" value="CAB62034.1"/>
    <property type="molecule type" value="Genomic_DNA"/>
</dbReference>
<dbReference type="EMBL" id="CP002686">
    <property type="protein sequence ID" value="AEE78157.1"/>
    <property type="molecule type" value="Genomic_DNA"/>
</dbReference>
<dbReference type="EMBL" id="AK117680">
    <property type="protein sequence ID" value="BAC42332.1"/>
    <property type="molecule type" value="mRNA"/>
</dbReference>
<dbReference type="EMBL" id="AY064154">
    <property type="protein sequence ID" value="AAL36060.1"/>
    <property type="molecule type" value="mRNA"/>
</dbReference>
<dbReference type="EMBL" id="AY081559">
    <property type="protein sequence ID" value="AAM10121.1"/>
    <property type="molecule type" value="mRNA"/>
</dbReference>
<dbReference type="EMBL" id="AY097410">
    <property type="protein sequence ID" value="AAM19926.1"/>
    <property type="molecule type" value="mRNA"/>
</dbReference>
<dbReference type="PIR" id="T45700">
    <property type="entry name" value="T45700"/>
</dbReference>
<dbReference type="RefSeq" id="NP_001190570.1">
    <property type="nucleotide sequence ID" value="NM_001203641.1"/>
</dbReference>
<dbReference type="RefSeq" id="NP_190227.1">
    <property type="nucleotide sequence ID" value="NM_114510.3"/>
</dbReference>
<dbReference type="RefSeq" id="NP_680457.1">
    <property type="nucleotide sequence ID" value="NM_148152.2"/>
</dbReference>
<dbReference type="SMR" id="P0DO44"/>
<dbReference type="FunCoup" id="P0DO44">
    <property type="interactions" value="993"/>
</dbReference>
<dbReference type="EnsemblPlants" id="AT3G46430.1">
    <property type="protein sequence ID" value="AT3G46430.1"/>
    <property type="gene ID" value="AT3G46430"/>
</dbReference>
<dbReference type="EnsemblPlants" id="AT5G59613.1">
    <property type="protein sequence ID" value="AT5G59613.1"/>
    <property type="gene ID" value="AT5G59613"/>
</dbReference>
<dbReference type="EnsemblPlants" id="AT5G59613.2">
    <property type="protein sequence ID" value="AT5G59613.2"/>
    <property type="gene ID" value="AT5G59613"/>
</dbReference>
<dbReference type="GeneID" id="823793"/>
<dbReference type="Gramene" id="AT3G46430.1">
    <property type="protein sequence ID" value="AT3G46430.1"/>
    <property type="gene ID" value="AT3G46430"/>
</dbReference>
<dbReference type="Gramene" id="AT5G59613.1">
    <property type="protein sequence ID" value="AT5G59613.1"/>
    <property type="gene ID" value="AT5G59613"/>
</dbReference>
<dbReference type="Gramene" id="AT5G59613.2">
    <property type="protein sequence ID" value="AT5G59613.2"/>
    <property type="gene ID" value="AT5G59613"/>
</dbReference>
<dbReference type="KEGG" id="ath:AT3G46430"/>
<dbReference type="KEGG" id="ath:AT5G59613"/>
<dbReference type="Araport" id="AT3G46430"/>
<dbReference type="TAIR" id="AT3G46430">
    <property type="gene designation" value="ATMTATP6"/>
</dbReference>
<dbReference type="InParanoid" id="P0DO44"/>
<dbReference type="OMA" id="REWKRTW"/>
<dbReference type="OrthoDB" id="1021093at2759"/>
<dbReference type="PRO" id="PR:P0DO44"/>
<dbReference type="Proteomes" id="UP000006548">
    <property type="component" value="Chromosome 3"/>
</dbReference>
<dbReference type="GO" id="GO:0005743">
    <property type="term" value="C:mitochondrial inner membrane"/>
    <property type="evidence" value="ECO:0007669"/>
    <property type="project" value="UniProtKB-SubCell"/>
</dbReference>
<dbReference type="GO" id="GO:0045259">
    <property type="term" value="C:proton-transporting ATP synthase complex"/>
    <property type="evidence" value="ECO:0007669"/>
    <property type="project" value="UniProtKB-KW"/>
</dbReference>
<dbReference type="GO" id="GO:1902600">
    <property type="term" value="P:proton transmembrane transport"/>
    <property type="evidence" value="ECO:0007669"/>
    <property type="project" value="UniProtKB-KW"/>
</dbReference>
<dbReference type="GO" id="GO:0009409">
    <property type="term" value="P:response to cold"/>
    <property type="evidence" value="ECO:0000314"/>
    <property type="project" value="UniProtKB"/>
</dbReference>
<dbReference type="GO" id="GO:0042542">
    <property type="term" value="P:response to hydrogen peroxide"/>
    <property type="evidence" value="ECO:0000270"/>
    <property type="project" value="UniProtKB"/>
</dbReference>
<dbReference type="GO" id="GO:0010555">
    <property type="term" value="P:response to mannitol"/>
    <property type="evidence" value="ECO:0000315"/>
    <property type="project" value="UniProtKB"/>
</dbReference>
<dbReference type="GO" id="GO:0006979">
    <property type="term" value="P:response to oxidative stress"/>
    <property type="evidence" value="ECO:0000315"/>
    <property type="project" value="UniProtKB"/>
</dbReference>
<dbReference type="GO" id="GO:1902074">
    <property type="term" value="P:response to salt"/>
    <property type="evidence" value="ECO:0000314"/>
    <property type="project" value="UniProtKB"/>
</dbReference>
<dbReference type="GO" id="GO:0009744">
    <property type="term" value="P:response to sucrose"/>
    <property type="evidence" value="ECO:0000270"/>
    <property type="project" value="UniProtKB"/>
</dbReference>
<dbReference type="GO" id="GO:0009414">
    <property type="term" value="P:response to water deprivation"/>
    <property type="evidence" value="ECO:0000314"/>
    <property type="project" value="UniProtKB"/>
</dbReference>
<dbReference type="InterPro" id="IPR052867">
    <property type="entry name" value="ATP_Synthase_Subunit_6"/>
</dbReference>
<dbReference type="PANTHER" id="PTHR34565">
    <property type="entry name" value="TRANSMEMBRANE PROTEIN"/>
    <property type="match status" value="1"/>
</dbReference>
<dbReference type="PANTHER" id="PTHR34565:SF1">
    <property type="entry name" value="TRANSMEMBRANE PROTEIN"/>
    <property type="match status" value="1"/>
</dbReference>